<sequence>MLKIKPAAGKAIRDPLTMKLLASEGEEKPRNSFWIRRLAAGDVVEVGSTENTADDTDAAPKKRSKSK</sequence>
<organism>
    <name type="scientific">Escherichia phage Mu</name>
    <name type="common">Bacteriophage Mu</name>
    <dbReference type="NCBI Taxonomy" id="2681603"/>
    <lineage>
        <taxon>Viruses</taxon>
        <taxon>Duplodnaviria</taxon>
        <taxon>Heunggongvirae</taxon>
        <taxon>Uroviricota</taxon>
        <taxon>Caudoviricetes</taxon>
        <taxon>Muvirus</taxon>
        <taxon>Muvirus mu</taxon>
    </lineage>
</organism>
<proteinExistence type="evidence at transcript level"/>
<comment type="function">
    <text evidence="3">May possibly stop tail sheath polymerization by capping the polymerizing tail sheath once it has reached its requisite length and prevent its depolymerization. Probably interacts with both the tube and sheath proteins.</text>
</comment>
<comment type="subcellular location">
    <subcellularLocation>
        <location evidence="3">Virion</location>
    </subcellularLocation>
    <subcellularLocation>
        <location evidence="3">Host cytoplasm</location>
    </subcellularLocation>
    <text evidence="3">Tail.</text>
</comment>
<comment type="induction">
    <text evidence="2">Expressed in the late phase of the viral replicative cycle. Expression of late genes is activated by the viral late transcription activator C.</text>
</comment>
<comment type="sequence caution" evidence="3">
    <conflict type="erroneous initiation">
        <sequence resource="EMBL-CDS" id="BAA19194"/>
    </conflict>
    <text>Extended N-terminus.</text>
</comment>
<feature type="chain" id="PRO_0000077832" description="Putative sheath terminator protein">
    <location>
        <begin position="1"/>
        <end position="67"/>
    </location>
</feature>
<feature type="region of interest" description="Disordered" evidence="1">
    <location>
        <begin position="45"/>
        <end position="67"/>
    </location>
</feature>
<evidence type="ECO:0000256" key="1">
    <source>
        <dbReference type="SAM" id="MobiDB-lite"/>
    </source>
</evidence>
<evidence type="ECO:0000269" key="2">
    <source>
    </source>
</evidence>
<evidence type="ECO:0000305" key="3"/>
<name>GP38_BPMU</name>
<keyword id="KW-1035">Host cytoplasm</keyword>
<keyword id="KW-0426">Late protein</keyword>
<keyword id="KW-1185">Reference proteome</keyword>
<keyword id="KW-1188">Viral release from host cell</keyword>
<keyword id="KW-1245">Viral tail assembly</keyword>
<keyword id="KW-1227">Viral tail protein</keyword>
<keyword id="KW-0946">Virion</keyword>
<protein>
    <recommendedName>
        <fullName>Putative sheath terminator protein</fullName>
    </recommendedName>
    <alternativeName>
        <fullName>Gene product 38</fullName>
        <shortName>gp38</shortName>
    </alternativeName>
</protein>
<dbReference type="EMBL" id="AF083977">
    <property type="protein sequence ID" value="AAF01116.1"/>
    <property type="molecule type" value="Genomic_DNA"/>
</dbReference>
<dbReference type="EMBL" id="AB000833">
    <property type="protein sequence ID" value="BAA19194.1"/>
    <property type="status" value="ALT_INIT"/>
    <property type="molecule type" value="Genomic_DNA"/>
</dbReference>
<dbReference type="RefSeq" id="NP_050642.1">
    <property type="nucleotide sequence ID" value="NC_000929.1"/>
</dbReference>
<dbReference type="GeneID" id="2636273"/>
<dbReference type="KEGG" id="vg:2636273"/>
<dbReference type="Proteomes" id="UP000002611">
    <property type="component" value="Genome"/>
</dbReference>
<dbReference type="GO" id="GO:0030430">
    <property type="term" value="C:host cell cytoplasm"/>
    <property type="evidence" value="ECO:0007669"/>
    <property type="project" value="UniProtKB-SubCell"/>
</dbReference>
<dbReference type="GO" id="GO:0098015">
    <property type="term" value="C:virus tail"/>
    <property type="evidence" value="ECO:0007669"/>
    <property type="project" value="UniProtKB-KW"/>
</dbReference>
<dbReference type="GO" id="GO:0098003">
    <property type="term" value="P:viral tail assembly"/>
    <property type="evidence" value="ECO:0007669"/>
    <property type="project" value="UniProtKB-KW"/>
</dbReference>
<dbReference type="InterPro" id="IPR024400">
    <property type="entry name" value="DUF2635"/>
</dbReference>
<dbReference type="Pfam" id="PF10948">
    <property type="entry name" value="DUF2635"/>
    <property type="match status" value="1"/>
</dbReference>
<reference key="1">
    <citation type="journal article" date="1998" name="Biochim. Biophys. Acta">
        <title>Discovery of the tail tube gene of bacteriophage Mu and sequence analysis of the sheath and tube genes.</title>
        <authorList>
            <person name="Takeda S."/>
            <person name="Sasaki T."/>
            <person name="Ritani A."/>
            <person name="Howe M.M."/>
            <person name="Arisaka F."/>
        </authorList>
    </citation>
    <scope>NUCLEOTIDE SEQUENCE [GENOMIC DNA]</scope>
</reference>
<reference key="2">
    <citation type="journal article" date="2002" name="J. Mol. Biol.">
        <title>Bacteriophage Mu genome sequence: analysis and comparison with Mu-like prophages in Haemophilus, Neisseria and Deinococcus.</title>
        <authorList>
            <person name="Morgan G.J."/>
            <person name="Hatfull G.F."/>
            <person name="Casjens S."/>
            <person name="Hendrix R.W."/>
        </authorList>
    </citation>
    <scope>NUCLEOTIDE SEQUENCE [LARGE SCALE GENOMIC DNA]</scope>
</reference>
<reference key="3">
    <citation type="journal article" date="1993" name="Genetics">
        <title>Mutational analysis of a C-dependent late promoter of bacteriophage Mu.</title>
        <authorList>
            <person name="Chiang L.W."/>
            <person name="Howe M.M."/>
        </authorList>
    </citation>
    <scope>INDUCTION</scope>
</reference>
<reference key="4">
    <citation type="journal article" date="2012" name="Adv. Exp. Med. Biol.">
        <title>Contractile tail machines of bacteriophages.</title>
        <authorList>
            <person name="Leiman P.G."/>
            <person name="Shneider M.M."/>
        </authorList>
    </citation>
    <scope>REVIEW</scope>
</reference>
<gene>
    <name type="ordered locus">Mup38</name>
</gene>
<organismHost>
    <name type="scientific">Enterobacteriaceae</name>
    <dbReference type="NCBI Taxonomy" id="543"/>
</organismHost>
<accession>P79677</accession>
<accession>Q9T1V7</accession>